<gene>
    <name evidence="1" type="primary">rplO</name>
    <name type="ordered locus">DehaBAV1_0470</name>
</gene>
<comment type="function">
    <text evidence="1">Binds to the 23S rRNA.</text>
</comment>
<comment type="subunit">
    <text evidence="1">Part of the 50S ribosomal subunit.</text>
</comment>
<comment type="similarity">
    <text evidence="1">Belongs to the universal ribosomal protein uL15 family.</text>
</comment>
<protein>
    <recommendedName>
        <fullName evidence="1">Large ribosomal subunit protein uL15</fullName>
    </recommendedName>
    <alternativeName>
        <fullName evidence="3">50S ribosomal protein L15</fullName>
    </alternativeName>
</protein>
<reference key="1">
    <citation type="submission" date="2007-05" db="EMBL/GenBank/DDBJ databases">
        <title>Complete sequence of Dehalococcoides sp. BAV1.</title>
        <authorList>
            <consortium name="US DOE Joint Genome Institute"/>
            <person name="Copeland A."/>
            <person name="Lucas S."/>
            <person name="Lapidus A."/>
            <person name="Barry K."/>
            <person name="Detter J.C."/>
            <person name="Glavina del Rio T."/>
            <person name="Hammon N."/>
            <person name="Israni S."/>
            <person name="Pitluck S."/>
            <person name="Lowry S."/>
            <person name="Clum A."/>
            <person name="Schmutz J."/>
            <person name="Larimer F."/>
            <person name="Land M."/>
            <person name="Hauser L."/>
            <person name="Kyrpides N."/>
            <person name="Kim E."/>
            <person name="Ritalahti K.M."/>
            <person name="Loeffler F."/>
            <person name="Richardson P."/>
        </authorList>
    </citation>
    <scope>NUCLEOTIDE SEQUENCE [LARGE SCALE GENOMIC DNA]</scope>
    <source>
        <strain>ATCC BAA-2100 / JCM 16839 / KCTC 5957 / BAV1</strain>
    </source>
</reference>
<evidence type="ECO:0000255" key="1">
    <source>
        <dbReference type="HAMAP-Rule" id="MF_01341"/>
    </source>
</evidence>
<evidence type="ECO:0000256" key="2">
    <source>
        <dbReference type="SAM" id="MobiDB-lite"/>
    </source>
</evidence>
<evidence type="ECO:0000305" key="3"/>
<accession>A5FRW3</accession>
<sequence length="153" mass="16705">MRLHELSPAPGSRKDRKRVGRGDAGRGNYSGRGMKGQKARSGGATRPGFEGGQLPIYLRLPRKRGFFNPFRIKYAVVNIEQLNMFEAGTEVTPETLLAAGLIRNFVKPVKILSSGHIDRALEVSAHKFSQAAKAQIEAAGGKVQEIDYAAEIE</sequence>
<organism>
    <name type="scientific">Dehalococcoides mccartyi (strain ATCC BAA-2100 / JCM 16839 / KCTC 5957 / BAV1)</name>
    <dbReference type="NCBI Taxonomy" id="216389"/>
    <lineage>
        <taxon>Bacteria</taxon>
        <taxon>Bacillati</taxon>
        <taxon>Chloroflexota</taxon>
        <taxon>Dehalococcoidia</taxon>
        <taxon>Dehalococcoidales</taxon>
        <taxon>Dehalococcoidaceae</taxon>
        <taxon>Dehalococcoides</taxon>
    </lineage>
</organism>
<dbReference type="EMBL" id="CP000688">
    <property type="protein sequence ID" value="ABQ17055.1"/>
    <property type="molecule type" value="Genomic_DNA"/>
</dbReference>
<dbReference type="SMR" id="A5FRW3"/>
<dbReference type="KEGG" id="deb:DehaBAV1_0470"/>
<dbReference type="PATRIC" id="fig|216389.18.peg.513"/>
<dbReference type="HOGENOM" id="CLU_055188_4_2_0"/>
<dbReference type="GO" id="GO:0022625">
    <property type="term" value="C:cytosolic large ribosomal subunit"/>
    <property type="evidence" value="ECO:0007669"/>
    <property type="project" value="TreeGrafter"/>
</dbReference>
<dbReference type="GO" id="GO:0019843">
    <property type="term" value="F:rRNA binding"/>
    <property type="evidence" value="ECO:0007669"/>
    <property type="project" value="UniProtKB-UniRule"/>
</dbReference>
<dbReference type="GO" id="GO:0003735">
    <property type="term" value="F:structural constituent of ribosome"/>
    <property type="evidence" value="ECO:0007669"/>
    <property type="project" value="InterPro"/>
</dbReference>
<dbReference type="GO" id="GO:0006412">
    <property type="term" value="P:translation"/>
    <property type="evidence" value="ECO:0007669"/>
    <property type="project" value="UniProtKB-UniRule"/>
</dbReference>
<dbReference type="Gene3D" id="3.100.10.10">
    <property type="match status" value="1"/>
</dbReference>
<dbReference type="HAMAP" id="MF_01341">
    <property type="entry name" value="Ribosomal_uL15"/>
    <property type="match status" value="1"/>
</dbReference>
<dbReference type="InterPro" id="IPR030878">
    <property type="entry name" value="Ribosomal_uL15"/>
</dbReference>
<dbReference type="InterPro" id="IPR021131">
    <property type="entry name" value="Ribosomal_uL15/eL18"/>
</dbReference>
<dbReference type="InterPro" id="IPR036227">
    <property type="entry name" value="Ribosomal_uL15/eL18_sf"/>
</dbReference>
<dbReference type="InterPro" id="IPR005749">
    <property type="entry name" value="Ribosomal_uL15_bac-type"/>
</dbReference>
<dbReference type="InterPro" id="IPR001196">
    <property type="entry name" value="Ribosomal_uL15_CS"/>
</dbReference>
<dbReference type="NCBIfam" id="TIGR01071">
    <property type="entry name" value="rplO_bact"/>
    <property type="match status" value="1"/>
</dbReference>
<dbReference type="PANTHER" id="PTHR12934">
    <property type="entry name" value="50S RIBOSOMAL PROTEIN L15"/>
    <property type="match status" value="1"/>
</dbReference>
<dbReference type="PANTHER" id="PTHR12934:SF11">
    <property type="entry name" value="LARGE RIBOSOMAL SUBUNIT PROTEIN UL15M"/>
    <property type="match status" value="1"/>
</dbReference>
<dbReference type="Pfam" id="PF00828">
    <property type="entry name" value="Ribosomal_L27A"/>
    <property type="match status" value="1"/>
</dbReference>
<dbReference type="SUPFAM" id="SSF52080">
    <property type="entry name" value="Ribosomal proteins L15p and L18e"/>
    <property type="match status" value="1"/>
</dbReference>
<dbReference type="PROSITE" id="PS00475">
    <property type="entry name" value="RIBOSOMAL_L15"/>
    <property type="match status" value="1"/>
</dbReference>
<proteinExistence type="inferred from homology"/>
<feature type="chain" id="PRO_1000086710" description="Large ribosomal subunit protein uL15">
    <location>
        <begin position="1"/>
        <end position="153"/>
    </location>
</feature>
<feature type="region of interest" description="Disordered" evidence="2">
    <location>
        <begin position="1"/>
        <end position="47"/>
    </location>
</feature>
<keyword id="KW-0687">Ribonucleoprotein</keyword>
<keyword id="KW-0689">Ribosomal protein</keyword>
<keyword id="KW-0694">RNA-binding</keyword>
<keyword id="KW-0699">rRNA-binding</keyword>
<name>RL15_DEHMB</name>